<name>DNAK_BIFLS</name>
<reference key="1">
    <citation type="journal article" date="2008" name="Proc. Natl. Acad. Sci. U.S.A.">
        <title>The genome sequence of Bifidobacterium longum subsp. infantis reveals adaptations for milk utilization within the infant microbiome.</title>
        <authorList>
            <person name="Sela D.A."/>
            <person name="Chapman J."/>
            <person name="Adeuya A."/>
            <person name="Kim J.H."/>
            <person name="Chen F."/>
            <person name="Whitehead T.R."/>
            <person name="Lapidus A."/>
            <person name="Rokhsar D.S."/>
            <person name="Lebrilla C.B."/>
            <person name="German J.B."/>
            <person name="Price N.P."/>
            <person name="Richardson P.M."/>
            <person name="Mills D.A."/>
        </authorList>
    </citation>
    <scope>NUCLEOTIDE SEQUENCE [LARGE SCALE GENOMIC DNA]</scope>
    <source>
        <strain>ATCC 15697 / DSM 20088 / JCM 1222 / NCTC 11817 / S12</strain>
    </source>
</reference>
<reference key="2">
    <citation type="journal article" date="2011" name="Nature">
        <title>Bifidobacteria can protect from enteropathogenic infection through production of acetate.</title>
        <authorList>
            <person name="Fukuda S."/>
            <person name="Toh H."/>
            <person name="Hase K."/>
            <person name="Oshima K."/>
            <person name="Nakanishi Y."/>
            <person name="Yoshimura K."/>
            <person name="Tobe T."/>
            <person name="Clarke J.M."/>
            <person name="Topping D.L."/>
            <person name="Suzuki T."/>
            <person name="Taylor T.D."/>
            <person name="Itoh K."/>
            <person name="Kikuchi J."/>
            <person name="Morita H."/>
            <person name="Hattori M."/>
            <person name="Ohno H."/>
        </authorList>
    </citation>
    <scope>NUCLEOTIDE SEQUENCE [LARGE SCALE GENOMIC DNA]</scope>
    <source>
        <strain>ATCC 15697 / DSM 20088 / JCM 1222 / NCTC 11817 / S12</strain>
    </source>
</reference>
<feature type="chain" id="PRO_1000133133" description="Chaperone protein DnaK">
    <location>
        <begin position="1"/>
        <end position="631"/>
    </location>
</feature>
<feature type="region of interest" description="Disordered" evidence="2">
    <location>
        <begin position="586"/>
        <end position="631"/>
    </location>
</feature>
<feature type="compositionally biased region" description="Low complexity" evidence="2">
    <location>
        <begin position="602"/>
        <end position="611"/>
    </location>
</feature>
<feature type="compositionally biased region" description="Acidic residues" evidence="2">
    <location>
        <begin position="612"/>
        <end position="631"/>
    </location>
</feature>
<feature type="modified residue" description="Phosphothreonine; by autocatalysis" evidence="1">
    <location>
        <position position="175"/>
    </location>
</feature>
<proteinExistence type="inferred from homology"/>
<protein>
    <recommendedName>
        <fullName evidence="1">Chaperone protein DnaK</fullName>
    </recommendedName>
    <alternativeName>
        <fullName evidence="1">HSP70</fullName>
    </alternativeName>
    <alternativeName>
        <fullName evidence="1">Heat shock 70 kDa protein</fullName>
    </alternativeName>
    <alternativeName>
        <fullName evidence="1">Heat shock protein 70</fullName>
    </alternativeName>
</protein>
<dbReference type="EMBL" id="CP001095">
    <property type="protein sequence ID" value="ACJ51270.1"/>
    <property type="molecule type" value="Genomic_DNA"/>
</dbReference>
<dbReference type="EMBL" id="AP010889">
    <property type="protein sequence ID" value="BAJ67739.1"/>
    <property type="molecule type" value="Genomic_DNA"/>
</dbReference>
<dbReference type="RefSeq" id="WP_012576591.1">
    <property type="nucleotide sequence ID" value="NZ_JDTT01000001.1"/>
</dbReference>
<dbReference type="SMR" id="B7GT47"/>
<dbReference type="KEGG" id="bln:Blon_0141"/>
<dbReference type="KEGG" id="blon:BLIJ_0145"/>
<dbReference type="PATRIC" id="fig|391904.8.peg.149"/>
<dbReference type="HOGENOM" id="CLU_005965_2_4_11"/>
<dbReference type="Proteomes" id="UP000001360">
    <property type="component" value="Chromosome"/>
</dbReference>
<dbReference type="GO" id="GO:0009274">
    <property type="term" value="C:peptidoglycan-based cell wall"/>
    <property type="evidence" value="ECO:0000314"/>
    <property type="project" value="CAFA"/>
</dbReference>
<dbReference type="GO" id="GO:0005524">
    <property type="term" value="F:ATP binding"/>
    <property type="evidence" value="ECO:0007669"/>
    <property type="project" value="UniProtKB-UniRule"/>
</dbReference>
<dbReference type="GO" id="GO:0140662">
    <property type="term" value="F:ATP-dependent protein folding chaperone"/>
    <property type="evidence" value="ECO:0007669"/>
    <property type="project" value="InterPro"/>
</dbReference>
<dbReference type="GO" id="GO:0002020">
    <property type="term" value="F:protease binding"/>
    <property type="evidence" value="ECO:0000353"/>
    <property type="project" value="CAFA"/>
</dbReference>
<dbReference type="GO" id="GO:0051082">
    <property type="term" value="F:unfolded protein binding"/>
    <property type="evidence" value="ECO:0007669"/>
    <property type="project" value="InterPro"/>
</dbReference>
<dbReference type="CDD" id="cd10234">
    <property type="entry name" value="ASKHA_NBD_HSP70_DnaK-like"/>
    <property type="match status" value="1"/>
</dbReference>
<dbReference type="FunFam" id="2.60.34.10:FF:000014">
    <property type="entry name" value="Chaperone protein DnaK HSP70"/>
    <property type="match status" value="1"/>
</dbReference>
<dbReference type="FunFam" id="1.20.1270.10:FF:000001">
    <property type="entry name" value="Molecular chaperone DnaK"/>
    <property type="match status" value="1"/>
</dbReference>
<dbReference type="FunFam" id="3.30.420.40:FF:000071">
    <property type="entry name" value="Molecular chaperone DnaK"/>
    <property type="match status" value="1"/>
</dbReference>
<dbReference type="FunFam" id="3.90.640.10:FF:000003">
    <property type="entry name" value="Molecular chaperone DnaK"/>
    <property type="match status" value="1"/>
</dbReference>
<dbReference type="Gene3D" id="1.20.1270.10">
    <property type="match status" value="1"/>
</dbReference>
<dbReference type="Gene3D" id="3.30.420.40">
    <property type="match status" value="2"/>
</dbReference>
<dbReference type="Gene3D" id="3.90.640.10">
    <property type="entry name" value="Actin, Chain A, domain 4"/>
    <property type="match status" value="1"/>
</dbReference>
<dbReference type="Gene3D" id="2.60.34.10">
    <property type="entry name" value="Substrate Binding Domain Of DNAk, Chain A, domain 1"/>
    <property type="match status" value="1"/>
</dbReference>
<dbReference type="HAMAP" id="MF_00332">
    <property type="entry name" value="DnaK"/>
    <property type="match status" value="1"/>
</dbReference>
<dbReference type="InterPro" id="IPR043129">
    <property type="entry name" value="ATPase_NBD"/>
</dbReference>
<dbReference type="InterPro" id="IPR012725">
    <property type="entry name" value="Chaperone_DnaK"/>
</dbReference>
<dbReference type="InterPro" id="IPR018181">
    <property type="entry name" value="Heat_shock_70_CS"/>
</dbReference>
<dbReference type="InterPro" id="IPR029048">
    <property type="entry name" value="HSP70_C_sf"/>
</dbReference>
<dbReference type="InterPro" id="IPR029047">
    <property type="entry name" value="HSP70_peptide-bd_sf"/>
</dbReference>
<dbReference type="InterPro" id="IPR013126">
    <property type="entry name" value="Hsp_70_fam"/>
</dbReference>
<dbReference type="NCBIfam" id="NF001413">
    <property type="entry name" value="PRK00290.1"/>
    <property type="match status" value="1"/>
</dbReference>
<dbReference type="NCBIfam" id="TIGR02350">
    <property type="entry name" value="prok_dnaK"/>
    <property type="match status" value="1"/>
</dbReference>
<dbReference type="PANTHER" id="PTHR19375">
    <property type="entry name" value="HEAT SHOCK PROTEIN 70KDA"/>
    <property type="match status" value="1"/>
</dbReference>
<dbReference type="Pfam" id="PF00012">
    <property type="entry name" value="HSP70"/>
    <property type="match status" value="2"/>
</dbReference>
<dbReference type="PRINTS" id="PR00301">
    <property type="entry name" value="HEATSHOCK70"/>
</dbReference>
<dbReference type="SUPFAM" id="SSF53067">
    <property type="entry name" value="Actin-like ATPase domain"/>
    <property type="match status" value="2"/>
</dbReference>
<dbReference type="SUPFAM" id="SSF100934">
    <property type="entry name" value="Heat shock protein 70kD (HSP70), C-terminal subdomain"/>
    <property type="match status" value="1"/>
</dbReference>
<dbReference type="SUPFAM" id="SSF100920">
    <property type="entry name" value="Heat shock protein 70kD (HSP70), peptide-binding domain"/>
    <property type="match status" value="1"/>
</dbReference>
<dbReference type="PROSITE" id="PS00297">
    <property type="entry name" value="HSP70_1"/>
    <property type="match status" value="1"/>
</dbReference>
<dbReference type="PROSITE" id="PS00329">
    <property type="entry name" value="HSP70_2"/>
    <property type="match status" value="1"/>
</dbReference>
<dbReference type="PROSITE" id="PS01036">
    <property type="entry name" value="HSP70_3"/>
    <property type="match status" value="1"/>
</dbReference>
<organism>
    <name type="scientific">Bifidobacterium longum subsp. infantis (strain ATCC 15697 / DSM 20088 / JCM 1222 / NCTC 11817 / S12)</name>
    <dbReference type="NCBI Taxonomy" id="391904"/>
    <lineage>
        <taxon>Bacteria</taxon>
        <taxon>Bacillati</taxon>
        <taxon>Actinomycetota</taxon>
        <taxon>Actinomycetes</taxon>
        <taxon>Bifidobacteriales</taxon>
        <taxon>Bifidobacteriaceae</taxon>
        <taxon>Bifidobacterium</taxon>
    </lineage>
</organism>
<comment type="function">
    <text evidence="1">Acts as a chaperone.</text>
</comment>
<comment type="induction">
    <text evidence="1">By stress conditions e.g. heat shock.</text>
</comment>
<comment type="similarity">
    <text evidence="1">Belongs to the heat shock protein 70 family.</text>
</comment>
<sequence>MARAVGIDLGTTNSCIATLEGGEPTVIVNAEGARTTPSVVAFSKSGEILVGEVAKRQAVTNVDRTISSVKRHMGTDWTVDIDGKKWTPQEISAQILMKLKRDAEAYLGEPVTDAVITCPAYFNDAQRQATKDAGKIAGLNVLRIINEPTAAALAYGLEKGKEDERILVFDLGGGTFDVSLLEIGKDDDGFSTIQVQATNGDNHLGGDDWDQKIIDWLVSEVKNKYGVDLSKDKIALQRLKEAAEQAKKELSSSTSTSISMQYLAMTPDGTPVHLDETLTRAHFEEMTSDLLGRCRTPFNNVLHDAGISVSDIDHVVLVGGSTRMPAVKDLVKELTGGKEANQSVNPDEVVAVGAAVQSGVIKGDRKDVLLIDVTPLSLGIETKGGIMTKLIDRNTAIPTKRSEVFSTAEDNQPSVLIQVYQGEREFARDNKPLGTFELTGIAPAPRGVPQIEVTFDIDANGIVHVSAKDKGTGKEQSMTITGGSGLPKDEIDRMVKEAEAHEAEDKQRKEDAETRNQAEAFAYSTEKLVNDNKDKLSDDIVKEVTDKVNALKEALKGDDTEKVKTAQTELMTAAQKIGQVLYAQQGAEGAAAGAGAAGAAGAGASAGSASGSDDDTVEAEVVDDDDDKDNK</sequence>
<keyword id="KW-0067">ATP-binding</keyword>
<keyword id="KW-0143">Chaperone</keyword>
<keyword id="KW-0547">Nucleotide-binding</keyword>
<keyword id="KW-0597">Phosphoprotein</keyword>
<keyword id="KW-0346">Stress response</keyword>
<gene>
    <name evidence="1" type="primary">dnaK</name>
    <name type="ordered locus">Blon_0141</name>
    <name type="ordered locus">BLIJ_0145</name>
</gene>
<evidence type="ECO:0000255" key="1">
    <source>
        <dbReference type="HAMAP-Rule" id="MF_00332"/>
    </source>
</evidence>
<evidence type="ECO:0000256" key="2">
    <source>
        <dbReference type="SAM" id="MobiDB-lite"/>
    </source>
</evidence>
<accession>B7GT47</accession>
<accession>E8MND3</accession>